<gene>
    <name evidence="1" type="primary">lipB</name>
    <name type="ordered locus">TTHA0240</name>
</gene>
<reference key="1">
    <citation type="submission" date="2004-11" db="EMBL/GenBank/DDBJ databases">
        <title>Complete genome sequence of Thermus thermophilus HB8.</title>
        <authorList>
            <person name="Masui R."/>
            <person name="Kurokawa K."/>
            <person name="Nakagawa N."/>
            <person name="Tokunaga F."/>
            <person name="Koyama Y."/>
            <person name="Shibata T."/>
            <person name="Oshima T."/>
            <person name="Yokoyama S."/>
            <person name="Yasunaga T."/>
            <person name="Kuramitsu S."/>
        </authorList>
    </citation>
    <scope>NUCLEOTIDE SEQUENCE [LARGE SCALE GENOMIC DNA]</scope>
    <source>
        <strain>ATCC 27634 / DSM 579 / HB8</strain>
    </source>
</reference>
<reference key="2">
    <citation type="journal article" date="2008" name="Proteins">
        <title>Structural basis of octanoic acid recognition by lipoate-protein ligase B.</title>
        <authorList>
            <person name="Kim do J."/>
            <person name="Lee S.J."/>
            <person name="Kim H.S."/>
            <person name="Kim K.H."/>
            <person name="Lee H.H."/>
            <person name="Yoon H.J."/>
            <person name="Suh S.W."/>
        </authorList>
    </citation>
    <scope>X-RAY CRYSTALLOGRAPHY (1.5 ANGSTROMS) OF 1-210</scope>
</reference>
<proteinExistence type="evidence at protein level"/>
<organism>
    <name type="scientific">Thermus thermophilus (strain ATCC 27634 / DSM 579 / HB8)</name>
    <dbReference type="NCBI Taxonomy" id="300852"/>
    <lineage>
        <taxon>Bacteria</taxon>
        <taxon>Thermotogati</taxon>
        <taxon>Deinococcota</taxon>
        <taxon>Deinococci</taxon>
        <taxon>Thermales</taxon>
        <taxon>Thermaceae</taxon>
        <taxon>Thermus</taxon>
    </lineage>
</organism>
<sequence length="217" mass="23924">MEFLVEDLGLVPYGEAWAYQKRVHREVVAGNRPPTLLLLEHPRVITLGRKATGENLLFPESWYRENGFELYWVERGGDVTYHGPGQLVGYPIFPVGREVRRFLRQIEEAIVRVAAGYGISAYPTPGYAGVWVGEDKLCAIGVAVKEGVSFHGFALNVNTDLNDFTVIVPCGLKGKGVTSLEKLLGRKVPMEEAKARVVAAFAEVFGLRPVEGSVHEA</sequence>
<accession>Q5SLQ3</accession>
<comment type="function">
    <text evidence="1">Catalyzes the transfer of endogenously produced octanoic acid from octanoyl-acyl-carrier-protein onto the lipoyl domains of lipoate-dependent enzymes. Lipoyl-ACP can also act as a substrate although octanoyl-ACP is likely to be the physiological substrate.</text>
</comment>
<comment type="catalytic activity">
    <reaction evidence="1">
        <text>octanoyl-[ACP] + L-lysyl-[protein] = N(6)-octanoyl-L-lysyl-[protein] + holo-[ACP] + H(+)</text>
        <dbReference type="Rhea" id="RHEA:17665"/>
        <dbReference type="Rhea" id="RHEA-COMP:9636"/>
        <dbReference type="Rhea" id="RHEA-COMP:9685"/>
        <dbReference type="Rhea" id="RHEA-COMP:9752"/>
        <dbReference type="Rhea" id="RHEA-COMP:9928"/>
        <dbReference type="ChEBI" id="CHEBI:15378"/>
        <dbReference type="ChEBI" id="CHEBI:29969"/>
        <dbReference type="ChEBI" id="CHEBI:64479"/>
        <dbReference type="ChEBI" id="CHEBI:78463"/>
        <dbReference type="ChEBI" id="CHEBI:78809"/>
        <dbReference type="EC" id="2.3.1.181"/>
    </reaction>
</comment>
<comment type="pathway">
    <text evidence="1">Protein modification; protein lipoylation via endogenous pathway; protein N(6)-(lipoyl)lysine from octanoyl-[acyl-carrier-protein]: step 1/2.</text>
</comment>
<comment type="subcellular location">
    <subcellularLocation>
        <location evidence="1">Cytoplasm</location>
    </subcellularLocation>
</comment>
<comment type="miscellaneous">
    <text evidence="1">In the reaction, the free carboxyl group of octanoic acid is attached via an amide linkage to the epsilon-amino group of a specific lysine residue of lipoyl domains of lipoate-dependent enzymes.</text>
</comment>
<comment type="similarity">
    <text evidence="1">Belongs to the LipB family.</text>
</comment>
<dbReference type="EC" id="2.3.1.181" evidence="1"/>
<dbReference type="EMBL" id="AP008226">
    <property type="protein sequence ID" value="BAD70063.1"/>
    <property type="molecule type" value="Genomic_DNA"/>
</dbReference>
<dbReference type="RefSeq" id="WP_011174104.1">
    <property type="nucleotide sequence ID" value="NC_006461.1"/>
</dbReference>
<dbReference type="RefSeq" id="YP_143506.1">
    <property type="nucleotide sequence ID" value="NC_006461.1"/>
</dbReference>
<dbReference type="PDB" id="2QHS">
    <property type="method" value="X-ray"/>
    <property type="resolution" value="1.50 A"/>
    <property type="chains" value="A=1-217"/>
</dbReference>
<dbReference type="PDB" id="2QHT">
    <property type="method" value="X-ray"/>
    <property type="resolution" value="1.50 A"/>
    <property type="chains" value="A=1-210"/>
</dbReference>
<dbReference type="PDB" id="2QHU">
    <property type="method" value="X-ray"/>
    <property type="resolution" value="1.90 A"/>
    <property type="chains" value="A=1-210"/>
</dbReference>
<dbReference type="PDB" id="2QHV">
    <property type="method" value="X-ray"/>
    <property type="resolution" value="1.60 A"/>
    <property type="chains" value="A=1-210"/>
</dbReference>
<dbReference type="PDBsum" id="2QHS"/>
<dbReference type="PDBsum" id="2QHT"/>
<dbReference type="PDBsum" id="2QHU"/>
<dbReference type="PDBsum" id="2QHV"/>
<dbReference type="SMR" id="Q5SLQ3"/>
<dbReference type="EnsemblBacteria" id="BAD70063">
    <property type="protein sequence ID" value="BAD70063"/>
    <property type="gene ID" value="BAD70063"/>
</dbReference>
<dbReference type="GeneID" id="3168876"/>
<dbReference type="KEGG" id="ttj:TTHA0240"/>
<dbReference type="PATRIC" id="fig|300852.9.peg.240"/>
<dbReference type="eggNOG" id="COG0321">
    <property type="taxonomic scope" value="Bacteria"/>
</dbReference>
<dbReference type="HOGENOM" id="CLU_035168_1_3_0"/>
<dbReference type="PhylomeDB" id="Q5SLQ3"/>
<dbReference type="UniPathway" id="UPA00538">
    <property type="reaction ID" value="UER00592"/>
</dbReference>
<dbReference type="EvolutionaryTrace" id="Q5SLQ3"/>
<dbReference type="Proteomes" id="UP000000532">
    <property type="component" value="Chromosome"/>
</dbReference>
<dbReference type="GO" id="GO:0005737">
    <property type="term" value="C:cytoplasm"/>
    <property type="evidence" value="ECO:0007669"/>
    <property type="project" value="UniProtKB-SubCell"/>
</dbReference>
<dbReference type="GO" id="GO:0033819">
    <property type="term" value="F:lipoyl(octanoyl) transferase activity"/>
    <property type="evidence" value="ECO:0007669"/>
    <property type="project" value="UniProtKB-EC"/>
</dbReference>
<dbReference type="GO" id="GO:0036211">
    <property type="term" value="P:protein modification process"/>
    <property type="evidence" value="ECO:0007669"/>
    <property type="project" value="InterPro"/>
</dbReference>
<dbReference type="CDD" id="cd16444">
    <property type="entry name" value="LipB"/>
    <property type="match status" value="1"/>
</dbReference>
<dbReference type="Gene3D" id="3.30.930.10">
    <property type="entry name" value="Bira Bifunctional Protein, Domain 2"/>
    <property type="match status" value="1"/>
</dbReference>
<dbReference type="HAMAP" id="MF_00013">
    <property type="entry name" value="LipB"/>
    <property type="match status" value="1"/>
</dbReference>
<dbReference type="InterPro" id="IPR045864">
    <property type="entry name" value="aa-tRNA-synth_II/BPL/LPL"/>
</dbReference>
<dbReference type="InterPro" id="IPR004143">
    <property type="entry name" value="BPL_LPL_catalytic"/>
</dbReference>
<dbReference type="InterPro" id="IPR000544">
    <property type="entry name" value="Octanoyltransferase"/>
</dbReference>
<dbReference type="InterPro" id="IPR020605">
    <property type="entry name" value="Octanoyltransferase_CS"/>
</dbReference>
<dbReference type="NCBIfam" id="TIGR00214">
    <property type="entry name" value="lipB"/>
    <property type="match status" value="1"/>
</dbReference>
<dbReference type="NCBIfam" id="NF010925">
    <property type="entry name" value="PRK14345.1"/>
    <property type="match status" value="1"/>
</dbReference>
<dbReference type="PANTHER" id="PTHR10993:SF7">
    <property type="entry name" value="LIPOYLTRANSFERASE 2, MITOCHONDRIAL-RELATED"/>
    <property type="match status" value="1"/>
</dbReference>
<dbReference type="PANTHER" id="PTHR10993">
    <property type="entry name" value="OCTANOYLTRANSFERASE"/>
    <property type="match status" value="1"/>
</dbReference>
<dbReference type="Pfam" id="PF21948">
    <property type="entry name" value="LplA-B_cat"/>
    <property type="match status" value="1"/>
</dbReference>
<dbReference type="PIRSF" id="PIRSF016262">
    <property type="entry name" value="LPLase"/>
    <property type="match status" value="1"/>
</dbReference>
<dbReference type="SUPFAM" id="SSF55681">
    <property type="entry name" value="Class II aaRS and biotin synthetases"/>
    <property type="match status" value="1"/>
</dbReference>
<dbReference type="PROSITE" id="PS51733">
    <property type="entry name" value="BPL_LPL_CATALYTIC"/>
    <property type="match status" value="1"/>
</dbReference>
<dbReference type="PROSITE" id="PS01313">
    <property type="entry name" value="LIPB"/>
    <property type="match status" value="1"/>
</dbReference>
<keyword id="KW-0002">3D-structure</keyword>
<keyword id="KW-0012">Acyltransferase</keyword>
<keyword id="KW-0963">Cytoplasm</keyword>
<keyword id="KW-1185">Reference proteome</keyword>
<keyword id="KW-0808">Transferase</keyword>
<protein>
    <recommendedName>
        <fullName evidence="1">Octanoyltransferase</fullName>
        <ecNumber evidence="1">2.3.1.181</ecNumber>
    </recommendedName>
    <alternativeName>
        <fullName evidence="1">Lipoate-protein ligase B</fullName>
    </alternativeName>
    <alternativeName>
        <fullName evidence="1">Lipoyl/octanoyl transferase</fullName>
    </alternativeName>
    <alternativeName>
        <fullName evidence="1">Octanoyl-[acyl-carrier-protein]-protein N-octanoyltransferase</fullName>
    </alternativeName>
</protein>
<name>LIPB_THET8</name>
<feature type="chain" id="PRO_0000242777" description="Octanoyltransferase">
    <location>
        <begin position="1"/>
        <end position="217"/>
    </location>
</feature>
<feature type="domain" description="BPL/LPL catalytic" evidence="2">
    <location>
        <begin position="30"/>
        <end position="209"/>
    </location>
</feature>
<feature type="active site" description="Acyl-thioester intermediate" evidence="1">
    <location>
        <position position="170"/>
    </location>
</feature>
<feature type="binding site">
    <location>
        <begin position="75"/>
        <end position="82"/>
    </location>
    <ligand>
        <name>substrate</name>
    </ligand>
</feature>
<feature type="binding site">
    <location>
        <begin position="139"/>
        <end position="141"/>
    </location>
    <ligand>
        <name>substrate</name>
    </ligand>
</feature>
<feature type="binding site">
    <location>
        <begin position="152"/>
        <end position="154"/>
    </location>
    <ligand>
        <name>substrate</name>
    </ligand>
</feature>
<feature type="site" description="Lowers pKa of active site Cys" evidence="1">
    <location>
        <position position="136"/>
    </location>
</feature>
<feature type="strand" evidence="3">
    <location>
        <begin position="2"/>
        <end position="10"/>
    </location>
</feature>
<feature type="helix" evidence="3">
    <location>
        <begin position="13"/>
        <end position="28"/>
    </location>
</feature>
<feature type="strand" evidence="3">
    <location>
        <begin position="35"/>
        <end position="40"/>
    </location>
</feature>
<feature type="strand" evidence="3">
    <location>
        <begin position="42"/>
        <end position="47"/>
    </location>
</feature>
<feature type="helix" evidence="3">
    <location>
        <begin position="53"/>
        <end position="55"/>
    </location>
</feature>
<feature type="strand" evidence="3">
    <location>
        <begin position="56"/>
        <end position="58"/>
    </location>
</feature>
<feature type="helix" evidence="3">
    <location>
        <begin position="60"/>
        <end position="65"/>
    </location>
</feature>
<feature type="strand" evidence="3">
    <location>
        <begin position="69"/>
        <end position="72"/>
    </location>
</feature>
<feature type="strand" evidence="3">
    <location>
        <begin position="75"/>
        <end position="82"/>
    </location>
</feature>
<feature type="strand" evidence="3">
    <location>
        <begin position="86"/>
        <end position="92"/>
    </location>
</feature>
<feature type="helix" evidence="3">
    <location>
        <begin position="99"/>
        <end position="116"/>
    </location>
</feature>
<feature type="strand" evidence="3">
    <location>
        <begin position="125"/>
        <end position="132"/>
    </location>
</feature>
<feature type="strand" evidence="3">
    <location>
        <begin position="135"/>
        <end position="145"/>
    </location>
</feature>
<feature type="strand" evidence="3">
    <location>
        <begin position="148"/>
        <end position="158"/>
    </location>
</feature>
<feature type="helix" evidence="3">
    <location>
        <begin position="161"/>
        <end position="166"/>
    </location>
</feature>
<feature type="strand" evidence="3">
    <location>
        <begin position="175"/>
        <end position="177"/>
    </location>
</feature>
<feature type="helix" evidence="3">
    <location>
        <begin position="180"/>
        <end position="184"/>
    </location>
</feature>
<feature type="helix" evidence="3">
    <location>
        <begin position="190"/>
        <end position="205"/>
    </location>
</feature>
<feature type="strand" evidence="3">
    <location>
        <begin position="208"/>
        <end position="210"/>
    </location>
</feature>
<evidence type="ECO:0000255" key="1">
    <source>
        <dbReference type="HAMAP-Rule" id="MF_00013"/>
    </source>
</evidence>
<evidence type="ECO:0000255" key="2">
    <source>
        <dbReference type="PROSITE-ProRule" id="PRU01067"/>
    </source>
</evidence>
<evidence type="ECO:0007829" key="3">
    <source>
        <dbReference type="PDB" id="2QHS"/>
    </source>
</evidence>